<name>UXUA_HISS1</name>
<feature type="chain" id="PRO_1000034331" description="Mannonate dehydratase">
    <location>
        <begin position="1"/>
        <end position="394"/>
    </location>
</feature>
<keyword id="KW-0408">Iron</keyword>
<keyword id="KW-0456">Lyase</keyword>
<keyword id="KW-0464">Manganese</keyword>
<sequence length="394" mass="44886">MEQTWRWYGPNDPVSLDDVRQAGATGVVTALHHIPNGQVWSVEEINKRKALLEEKGLVWSVVESVPIHEDIKTQTGNYQQWIDNYKQTLRNLASCGIDIVCYNFMPVLDWTRTDLEYEMPDGSKALRFDQVAFAAFELYILKRPGAEETYSPEEQAEAKAYFDQMSEADIAKLTKNIIAGLPGSEEGYTLEEFQAQLDRYKGISTEKFRTHLAYFLNEIVPVAQEVGIRMAIHPDDPPRPILGLPRIVSTIDDMQWFVDTQPLAANGFTFCTGSYGVLAENDLVKMAEKFADRIYFAHLRSTQREENPRSFHEADHLAGDVNMFGVTKALLTEEYRRKANGDNRLIPMRPDHGHQMLDDLKKKTNPGYSAIGRLRGLAEFRGLELALKKVYFND</sequence>
<reference key="1">
    <citation type="journal article" date="2007" name="J. Bacteriol.">
        <title>Complete genome sequence of Haemophilus somnus (Histophilus somni) strain 129Pt and comparison to Haemophilus ducreyi 35000HP and Haemophilus influenzae Rd.</title>
        <authorList>
            <person name="Challacombe J.F."/>
            <person name="Duncan A.J."/>
            <person name="Brettin T.S."/>
            <person name="Bruce D."/>
            <person name="Chertkov O."/>
            <person name="Detter J.C."/>
            <person name="Han C.S."/>
            <person name="Misra M."/>
            <person name="Richardson P."/>
            <person name="Tapia R."/>
            <person name="Thayer N."/>
            <person name="Xie G."/>
            <person name="Inzana T.J."/>
        </authorList>
    </citation>
    <scope>NUCLEOTIDE SEQUENCE [LARGE SCALE GENOMIC DNA]</scope>
    <source>
        <strain>129Pt</strain>
    </source>
</reference>
<protein>
    <recommendedName>
        <fullName evidence="1">Mannonate dehydratase</fullName>
        <ecNumber evidence="1">4.2.1.8</ecNumber>
    </recommendedName>
    <alternativeName>
        <fullName evidence="1">D-mannonate hydro-lyase</fullName>
    </alternativeName>
</protein>
<evidence type="ECO:0000255" key="1">
    <source>
        <dbReference type="HAMAP-Rule" id="MF_00106"/>
    </source>
</evidence>
<comment type="function">
    <text evidence="1">Catalyzes the dehydration of D-mannonate.</text>
</comment>
<comment type="catalytic activity">
    <reaction evidence="1">
        <text>D-mannonate = 2-dehydro-3-deoxy-D-gluconate + H2O</text>
        <dbReference type="Rhea" id="RHEA:20097"/>
        <dbReference type="ChEBI" id="CHEBI:15377"/>
        <dbReference type="ChEBI" id="CHEBI:17767"/>
        <dbReference type="ChEBI" id="CHEBI:57990"/>
        <dbReference type="EC" id="4.2.1.8"/>
    </reaction>
</comment>
<comment type="cofactor">
    <cofactor evidence="1">
        <name>Fe(2+)</name>
        <dbReference type="ChEBI" id="CHEBI:29033"/>
    </cofactor>
    <cofactor evidence="1">
        <name>Mn(2+)</name>
        <dbReference type="ChEBI" id="CHEBI:29035"/>
    </cofactor>
</comment>
<comment type="pathway">
    <text evidence="1">Carbohydrate metabolism; pentose and glucuronate interconversion.</text>
</comment>
<comment type="similarity">
    <text evidence="1">Belongs to the mannonate dehydratase family.</text>
</comment>
<accession>Q0I586</accession>
<proteinExistence type="inferred from homology"/>
<dbReference type="EC" id="4.2.1.8" evidence="1"/>
<dbReference type="EMBL" id="CP000436">
    <property type="protein sequence ID" value="ABI25864.1"/>
    <property type="molecule type" value="Genomic_DNA"/>
</dbReference>
<dbReference type="SMR" id="Q0I586"/>
<dbReference type="KEGG" id="hso:HS_1596"/>
<dbReference type="eggNOG" id="COG1312">
    <property type="taxonomic scope" value="Bacteria"/>
</dbReference>
<dbReference type="HOGENOM" id="CLU_058621_2_0_6"/>
<dbReference type="UniPathway" id="UPA00246"/>
<dbReference type="GO" id="GO:0008198">
    <property type="term" value="F:ferrous iron binding"/>
    <property type="evidence" value="ECO:0007669"/>
    <property type="project" value="TreeGrafter"/>
</dbReference>
<dbReference type="GO" id="GO:0030145">
    <property type="term" value="F:manganese ion binding"/>
    <property type="evidence" value="ECO:0007669"/>
    <property type="project" value="TreeGrafter"/>
</dbReference>
<dbReference type="GO" id="GO:0008927">
    <property type="term" value="F:mannonate dehydratase activity"/>
    <property type="evidence" value="ECO:0007669"/>
    <property type="project" value="UniProtKB-UniRule"/>
</dbReference>
<dbReference type="GO" id="GO:0042840">
    <property type="term" value="P:D-glucuronate catabolic process"/>
    <property type="evidence" value="ECO:0007669"/>
    <property type="project" value="TreeGrafter"/>
</dbReference>
<dbReference type="FunFam" id="3.20.20.150:FF:000004">
    <property type="entry name" value="Mannonate dehydratase"/>
    <property type="match status" value="1"/>
</dbReference>
<dbReference type="FunFam" id="3.20.20.150:FF:000005">
    <property type="entry name" value="Mannonate dehydratase"/>
    <property type="match status" value="1"/>
</dbReference>
<dbReference type="Gene3D" id="3.20.20.150">
    <property type="entry name" value="Divalent-metal-dependent TIM barrel enzymes"/>
    <property type="match status" value="1"/>
</dbReference>
<dbReference type="HAMAP" id="MF_00106">
    <property type="entry name" value="UxuA"/>
    <property type="match status" value="1"/>
</dbReference>
<dbReference type="InterPro" id="IPR004628">
    <property type="entry name" value="Man_deHydtase"/>
</dbReference>
<dbReference type="InterPro" id="IPR036237">
    <property type="entry name" value="Xyl_isomerase-like_sf"/>
</dbReference>
<dbReference type="NCBIfam" id="NF003027">
    <property type="entry name" value="PRK03906.1"/>
    <property type="match status" value="1"/>
</dbReference>
<dbReference type="NCBIfam" id="TIGR00695">
    <property type="entry name" value="uxuA"/>
    <property type="match status" value="1"/>
</dbReference>
<dbReference type="PANTHER" id="PTHR30387">
    <property type="entry name" value="MANNONATE DEHYDRATASE"/>
    <property type="match status" value="1"/>
</dbReference>
<dbReference type="PANTHER" id="PTHR30387:SF2">
    <property type="entry name" value="MANNONATE DEHYDRATASE"/>
    <property type="match status" value="1"/>
</dbReference>
<dbReference type="Pfam" id="PF03786">
    <property type="entry name" value="UxuA"/>
    <property type="match status" value="1"/>
</dbReference>
<dbReference type="PIRSF" id="PIRSF016049">
    <property type="entry name" value="Man_dehyd"/>
    <property type="match status" value="1"/>
</dbReference>
<dbReference type="SUPFAM" id="SSF51658">
    <property type="entry name" value="Xylose isomerase-like"/>
    <property type="match status" value="1"/>
</dbReference>
<gene>
    <name evidence="1" type="primary">uxuA</name>
    <name type="ordered locus">HS_1596</name>
</gene>
<organism>
    <name type="scientific">Histophilus somni (strain 129Pt)</name>
    <name type="common">Haemophilus somnus</name>
    <dbReference type="NCBI Taxonomy" id="205914"/>
    <lineage>
        <taxon>Bacteria</taxon>
        <taxon>Pseudomonadati</taxon>
        <taxon>Pseudomonadota</taxon>
        <taxon>Gammaproteobacteria</taxon>
        <taxon>Pasteurellales</taxon>
        <taxon>Pasteurellaceae</taxon>
        <taxon>Histophilus</taxon>
    </lineage>
</organism>